<dbReference type="EC" id="2.7.7.72" evidence="1"/>
<dbReference type="EC" id="3.1.3.-" evidence="1"/>
<dbReference type="EC" id="3.1.4.-" evidence="1"/>
<dbReference type="EMBL" id="CP000458">
    <property type="protein sequence ID" value="ABK09779.1"/>
    <property type="molecule type" value="Genomic_DNA"/>
</dbReference>
<dbReference type="RefSeq" id="WP_011546422.1">
    <property type="nucleotide sequence ID" value="NC_008542.1"/>
</dbReference>
<dbReference type="SMR" id="A0KBA2"/>
<dbReference type="KEGG" id="bch:Bcen2424_3031"/>
<dbReference type="HOGENOM" id="CLU_015961_1_1_4"/>
<dbReference type="GO" id="GO:0005524">
    <property type="term" value="F:ATP binding"/>
    <property type="evidence" value="ECO:0007669"/>
    <property type="project" value="UniProtKB-UniRule"/>
</dbReference>
<dbReference type="GO" id="GO:0004810">
    <property type="term" value="F:CCA tRNA nucleotidyltransferase activity"/>
    <property type="evidence" value="ECO:0007669"/>
    <property type="project" value="UniProtKB-UniRule"/>
</dbReference>
<dbReference type="GO" id="GO:0004112">
    <property type="term" value="F:cyclic-nucleotide phosphodiesterase activity"/>
    <property type="evidence" value="ECO:0007669"/>
    <property type="project" value="UniProtKB-UniRule"/>
</dbReference>
<dbReference type="GO" id="GO:0000287">
    <property type="term" value="F:magnesium ion binding"/>
    <property type="evidence" value="ECO:0007669"/>
    <property type="project" value="UniProtKB-UniRule"/>
</dbReference>
<dbReference type="GO" id="GO:0016791">
    <property type="term" value="F:phosphatase activity"/>
    <property type="evidence" value="ECO:0007669"/>
    <property type="project" value="UniProtKB-UniRule"/>
</dbReference>
<dbReference type="GO" id="GO:0000049">
    <property type="term" value="F:tRNA binding"/>
    <property type="evidence" value="ECO:0007669"/>
    <property type="project" value="UniProtKB-UniRule"/>
</dbReference>
<dbReference type="GO" id="GO:0042245">
    <property type="term" value="P:RNA repair"/>
    <property type="evidence" value="ECO:0007669"/>
    <property type="project" value="UniProtKB-KW"/>
</dbReference>
<dbReference type="GO" id="GO:0001680">
    <property type="term" value="P:tRNA 3'-terminal CCA addition"/>
    <property type="evidence" value="ECO:0007669"/>
    <property type="project" value="UniProtKB-UniRule"/>
</dbReference>
<dbReference type="CDD" id="cd05398">
    <property type="entry name" value="NT_ClassII-CCAase"/>
    <property type="match status" value="1"/>
</dbReference>
<dbReference type="Gene3D" id="3.30.460.10">
    <property type="entry name" value="Beta Polymerase, domain 2"/>
    <property type="match status" value="1"/>
</dbReference>
<dbReference type="Gene3D" id="1.10.3090.10">
    <property type="entry name" value="cca-adding enzyme, domain 2"/>
    <property type="match status" value="1"/>
</dbReference>
<dbReference type="HAMAP" id="MF_01261">
    <property type="entry name" value="CCA_bact_type1"/>
    <property type="match status" value="1"/>
</dbReference>
<dbReference type="HAMAP" id="MF_01262">
    <property type="entry name" value="CCA_bact_type2"/>
    <property type="match status" value="1"/>
</dbReference>
<dbReference type="InterPro" id="IPR012006">
    <property type="entry name" value="CCA_bact"/>
</dbReference>
<dbReference type="InterPro" id="IPR006674">
    <property type="entry name" value="HD_domain"/>
</dbReference>
<dbReference type="InterPro" id="IPR043519">
    <property type="entry name" value="NT_sf"/>
</dbReference>
<dbReference type="InterPro" id="IPR002646">
    <property type="entry name" value="PolA_pol_head_dom"/>
</dbReference>
<dbReference type="InterPro" id="IPR032828">
    <property type="entry name" value="PolyA_RNA-bd"/>
</dbReference>
<dbReference type="InterPro" id="IPR050124">
    <property type="entry name" value="tRNA_CCA-adding_enzyme"/>
</dbReference>
<dbReference type="NCBIfam" id="NF008137">
    <property type="entry name" value="PRK10885.1"/>
    <property type="match status" value="1"/>
</dbReference>
<dbReference type="PANTHER" id="PTHR47545">
    <property type="entry name" value="MULTIFUNCTIONAL CCA PROTEIN"/>
    <property type="match status" value="1"/>
</dbReference>
<dbReference type="PANTHER" id="PTHR47545:SF1">
    <property type="entry name" value="MULTIFUNCTIONAL CCA PROTEIN"/>
    <property type="match status" value="1"/>
</dbReference>
<dbReference type="Pfam" id="PF01966">
    <property type="entry name" value="HD"/>
    <property type="match status" value="1"/>
</dbReference>
<dbReference type="Pfam" id="PF01743">
    <property type="entry name" value="PolyA_pol"/>
    <property type="match status" value="1"/>
</dbReference>
<dbReference type="Pfam" id="PF12627">
    <property type="entry name" value="PolyA_pol_RNAbd"/>
    <property type="match status" value="1"/>
</dbReference>
<dbReference type="PIRSF" id="PIRSF000813">
    <property type="entry name" value="CCA_bact"/>
    <property type="match status" value="1"/>
</dbReference>
<dbReference type="SUPFAM" id="SSF81301">
    <property type="entry name" value="Nucleotidyltransferase"/>
    <property type="match status" value="1"/>
</dbReference>
<dbReference type="SUPFAM" id="SSF81891">
    <property type="entry name" value="Poly A polymerase C-terminal region-like"/>
    <property type="match status" value="1"/>
</dbReference>
<dbReference type="PROSITE" id="PS51831">
    <property type="entry name" value="HD"/>
    <property type="match status" value="1"/>
</dbReference>
<evidence type="ECO:0000255" key="1">
    <source>
        <dbReference type="HAMAP-Rule" id="MF_01261"/>
    </source>
</evidence>
<keyword id="KW-0067">ATP-binding</keyword>
<keyword id="KW-0378">Hydrolase</keyword>
<keyword id="KW-0460">Magnesium</keyword>
<keyword id="KW-0479">Metal-binding</keyword>
<keyword id="KW-0511">Multifunctional enzyme</keyword>
<keyword id="KW-0533">Nickel</keyword>
<keyword id="KW-0547">Nucleotide-binding</keyword>
<keyword id="KW-0548">Nucleotidyltransferase</keyword>
<keyword id="KW-0692">RNA repair</keyword>
<keyword id="KW-0694">RNA-binding</keyword>
<keyword id="KW-0808">Transferase</keyword>
<keyword id="KW-0819">tRNA processing</keyword>
<comment type="function">
    <text evidence="1">Catalyzes the addition and repair of the essential 3'-terminal CCA sequence in tRNAs without using a nucleic acid template. Adds these three nucleotides in the order of C, C, and A to the tRNA nucleotide-73, using CTP and ATP as substrates and producing inorganic pyrophosphate. tRNA 3'-terminal CCA addition is required both for tRNA processing and repair. Also involved in tRNA surveillance by mediating tandem CCA addition to generate a CCACCA at the 3' terminus of unstable tRNAs. While stable tRNAs receive only 3'-terminal CCA, unstable tRNAs are marked with CCACCA and rapidly degraded.</text>
</comment>
<comment type="catalytic activity">
    <reaction evidence="1">
        <text>a tRNA precursor + 2 CTP + ATP = a tRNA with a 3' CCA end + 3 diphosphate</text>
        <dbReference type="Rhea" id="RHEA:14433"/>
        <dbReference type="Rhea" id="RHEA-COMP:10465"/>
        <dbReference type="Rhea" id="RHEA-COMP:10468"/>
        <dbReference type="ChEBI" id="CHEBI:30616"/>
        <dbReference type="ChEBI" id="CHEBI:33019"/>
        <dbReference type="ChEBI" id="CHEBI:37563"/>
        <dbReference type="ChEBI" id="CHEBI:74896"/>
        <dbReference type="ChEBI" id="CHEBI:83071"/>
        <dbReference type="EC" id="2.7.7.72"/>
    </reaction>
</comment>
<comment type="catalytic activity">
    <reaction evidence="1">
        <text>a tRNA with a 3' CCA end + 2 CTP + ATP = a tRNA with a 3' CCACCA end + 3 diphosphate</text>
        <dbReference type="Rhea" id="RHEA:76235"/>
        <dbReference type="Rhea" id="RHEA-COMP:10468"/>
        <dbReference type="Rhea" id="RHEA-COMP:18655"/>
        <dbReference type="ChEBI" id="CHEBI:30616"/>
        <dbReference type="ChEBI" id="CHEBI:33019"/>
        <dbReference type="ChEBI" id="CHEBI:37563"/>
        <dbReference type="ChEBI" id="CHEBI:83071"/>
        <dbReference type="ChEBI" id="CHEBI:195187"/>
    </reaction>
    <physiologicalReaction direction="left-to-right" evidence="1">
        <dbReference type="Rhea" id="RHEA:76236"/>
    </physiologicalReaction>
</comment>
<comment type="cofactor">
    <cofactor evidence="1">
        <name>Mg(2+)</name>
        <dbReference type="ChEBI" id="CHEBI:18420"/>
    </cofactor>
    <text evidence="1">Magnesium is required for nucleotidyltransferase activity.</text>
</comment>
<comment type="cofactor">
    <cofactor evidence="1">
        <name>Ni(2+)</name>
        <dbReference type="ChEBI" id="CHEBI:49786"/>
    </cofactor>
    <text evidence="1">Nickel for phosphatase activity.</text>
</comment>
<comment type="subunit">
    <text evidence="1">Monomer. Can also form homodimers and oligomers.</text>
</comment>
<comment type="domain">
    <text evidence="1">Comprises two domains: an N-terminal domain containing the nucleotidyltransferase activity and a C-terminal HD domain associated with both phosphodiesterase and phosphatase activities.</text>
</comment>
<comment type="miscellaneous">
    <text evidence="1">A single active site specifically recognizes both ATP and CTP and is responsible for their addition.</text>
</comment>
<comment type="similarity">
    <text evidence="1">Belongs to the tRNA nucleotidyltransferase/poly(A) polymerase family. Bacterial CCA-adding enzyme type 1 subfamily.</text>
</comment>
<sequence length="413" mass="45489">MNIYAVGGAIRDELLGVPVQDRDYVVVGATPEQMTAQGFRAVGKDFPVFLHPQTQEEYALARTERKTAAGYHGFQFHYAPDVTLDEDLARRDLTINAMAREVSPEGALVGPVIDPFDGQADLRARVFRHVSDAFVEDPVRILRIARFAARFADFTVADETLALMRRMVDAGEVDALVPERVWQEIARGLMEAKPSRMFAVLRDCGALARILPEVDALWGVPQRADYHPEVDTGVHVMMVVDYAAKQGYSLAVRFAALTHDLGKGTTPADVLPRHVGHESRSVELLKPLCERLRVPNECRDLALVVAREHGNLHRVMEMGAAALVRLFERSDALRKPARFAELLQACESDARGRLGLDAQPYPQAERLRVALAAARSVDAGAIARGIGNDTEKIKEAVHRARIQAVAQALAIGE</sequence>
<gene>
    <name evidence="1" type="primary">cca</name>
    <name type="ordered locus">Bcen2424_3031</name>
</gene>
<proteinExistence type="inferred from homology"/>
<protein>
    <recommendedName>
        <fullName evidence="1">Multifunctional CCA protein</fullName>
    </recommendedName>
    <domain>
        <recommendedName>
            <fullName evidence="1">CCA-adding enzyme</fullName>
            <ecNumber evidence="1">2.7.7.72</ecNumber>
        </recommendedName>
        <alternativeName>
            <fullName evidence="1">CCA tRNA nucleotidyltransferase</fullName>
        </alternativeName>
        <alternativeName>
            <fullName evidence="1">tRNA CCA-pyrophosphorylase</fullName>
        </alternativeName>
        <alternativeName>
            <fullName evidence="1">tRNA adenylyl-/cytidylyl-transferase</fullName>
        </alternativeName>
        <alternativeName>
            <fullName evidence="1">tRNA nucleotidyltransferase</fullName>
        </alternativeName>
        <alternativeName>
            <fullName evidence="1">tRNA-NT</fullName>
        </alternativeName>
    </domain>
    <domain>
        <recommendedName>
            <fullName evidence="1">2'-nucleotidase</fullName>
            <ecNumber evidence="1">3.1.3.-</ecNumber>
        </recommendedName>
    </domain>
    <domain>
        <recommendedName>
            <fullName evidence="1">2',3'-cyclic phosphodiesterase</fullName>
            <ecNumber evidence="1">3.1.4.-</ecNumber>
        </recommendedName>
    </domain>
    <domain>
        <recommendedName>
            <fullName evidence="1">Phosphatase</fullName>
            <ecNumber evidence="1">3.1.3.-</ecNumber>
        </recommendedName>
    </domain>
</protein>
<name>CCA_BURCH</name>
<reference key="1">
    <citation type="submission" date="2006-08" db="EMBL/GenBank/DDBJ databases">
        <title>Complete sequence of chromosome 1 of Burkholderia cenocepacia HI2424.</title>
        <authorList>
            <person name="Copeland A."/>
            <person name="Lucas S."/>
            <person name="Lapidus A."/>
            <person name="Barry K."/>
            <person name="Detter J.C."/>
            <person name="Glavina del Rio T."/>
            <person name="Hammon N."/>
            <person name="Israni S."/>
            <person name="Pitluck S."/>
            <person name="Chain P."/>
            <person name="Malfatti S."/>
            <person name="Shin M."/>
            <person name="Vergez L."/>
            <person name="Schmutz J."/>
            <person name="Larimer F."/>
            <person name="Land M."/>
            <person name="Hauser L."/>
            <person name="Kyrpides N."/>
            <person name="Kim E."/>
            <person name="LiPuma J.J."/>
            <person name="Gonzalez C.F."/>
            <person name="Konstantinidis K."/>
            <person name="Tiedje J.M."/>
            <person name="Richardson P."/>
        </authorList>
    </citation>
    <scope>NUCLEOTIDE SEQUENCE [LARGE SCALE GENOMIC DNA]</scope>
    <source>
        <strain>HI2424</strain>
    </source>
</reference>
<organism>
    <name type="scientific">Burkholderia cenocepacia (strain HI2424)</name>
    <dbReference type="NCBI Taxonomy" id="331272"/>
    <lineage>
        <taxon>Bacteria</taxon>
        <taxon>Pseudomonadati</taxon>
        <taxon>Pseudomonadota</taxon>
        <taxon>Betaproteobacteria</taxon>
        <taxon>Burkholderiales</taxon>
        <taxon>Burkholderiaceae</taxon>
        <taxon>Burkholderia</taxon>
        <taxon>Burkholderia cepacia complex</taxon>
    </lineage>
</organism>
<feature type="chain" id="PRO_1000054251" description="Multifunctional CCA protein">
    <location>
        <begin position="1"/>
        <end position="413"/>
    </location>
</feature>
<feature type="domain" description="HD" evidence="1">
    <location>
        <begin position="232"/>
        <end position="333"/>
    </location>
</feature>
<feature type="binding site" evidence="1">
    <location>
        <position position="8"/>
    </location>
    <ligand>
        <name>ATP</name>
        <dbReference type="ChEBI" id="CHEBI:30616"/>
    </ligand>
</feature>
<feature type="binding site" evidence="1">
    <location>
        <position position="8"/>
    </location>
    <ligand>
        <name>CTP</name>
        <dbReference type="ChEBI" id="CHEBI:37563"/>
    </ligand>
</feature>
<feature type="binding site" evidence="1">
    <location>
        <position position="11"/>
    </location>
    <ligand>
        <name>ATP</name>
        <dbReference type="ChEBI" id="CHEBI:30616"/>
    </ligand>
</feature>
<feature type="binding site" evidence="1">
    <location>
        <position position="11"/>
    </location>
    <ligand>
        <name>CTP</name>
        <dbReference type="ChEBI" id="CHEBI:37563"/>
    </ligand>
</feature>
<feature type="binding site" evidence="1">
    <location>
        <position position="21"/>
    </location>
    <ligand>
        <name>Mg(2+)</name>
        <dbReference type="ChEBI" id="CHEBI:18420"/>
    </ligand>
</feature>
<feature type="binding site" evidence="1">
    <location>
        <position position="23"/>
    </location>
    <ligand>
        <name>Mg(2+)</name>
        <dbReference type="ChEBI" id="CHEBI:18420"/>
    </ligand>
</feature>
<feature type="binding site" evidence="1">
    <location>
        <position position="91"/>
    </location>
    <ligand>
        <name>ATP</name>
        <dbReference type="ChEBI" id="CHEBI:30616"/>
    </ligand>
</feature>
<feature type="binding site" evidence="1">
    <location>
        <position position="91"/>
    </location>
    <ligand>
        <name>CTP</name>
        <dbReference type="ChEBI" id="CHEBI:37563"/>
    </ligand>
</feature>
<feature type="binding site" evidence="1">
    <location>
        <position position="143"/>
    </location>
    <ligand>
        <name>ATP</name>
        <dbReference type="ChEBI" id="CHEBI:30616"/>
    </ligand>
</feature>
<feature type="binding site" evidence="1">
    <location>
        <position position="143"/>
    </location>
    <ligand>
        <name>CTP</name>
        <dbReference type="ChEBI" id="CHEBI:37563"/>
    </ligand>
</feature>
<feature type="binding site" evidence="1">
    <location>
        <position position="146"/>
    </location>
    <ligand>
        <name>ATP</name>
        <dbReference type="ChEBI" id="CHEBI:30616"/>
    </ligand>
</feature>
<feature type="binding site" evidence="1">
    <location>
        <position position="146"/>
    </location>
    <ligand>
        <name>CTP</name>
        <dbReference type="ChEBI" id="CHEBI:37563"/>
    </ligand>
</feature>
<accession>A0KBA2</accession>